<organism>
    <name type="scientific">Homo sapiens</name>
    <name type="common">Human</name>
    <dbReference type="NCBI Taxonomy" id="9606"/>
    <lineage>
        <taxon>Eukaryota</taxon>
        <taxon>Metazoa</taxon>
        <taxon>Chordata</taxon>
        <taxon>Craniata</taxon>
        <taxon>Vertebrata</taxon>
        <taxon>Euteleostomi</taxon>
        <taxon>Mammalia</taxon>
        <taxon>Eutheria</taxon>
        <taxon>Euarchontoglires</taxon>
        <taxon>Primates</taxon>
        <taxon>Haplorrhini</taxon>
        <taxon>Catarrhini</taxon>
        <taxon>Hominidae</taxon>
        <taxon>Homo</taxon>
    </lineage>
</organism>
<accession>Q0VAK6</accession>
<accession>B4DT85</accession>
<accession>Q0JTT2</accession>
<accession>Q5JPG6</accession>
<accession>Q8IUK4</accession>
<accession>Q96LS4</accession>
<proteinExistence type="evidence at protein level"/>
<reference key="1">
    <citation type="journal article" date="2004" name="Nat. Genet.">
        <title>Complete sequencing and characterization of 21,243 full-length human cDNAs.</title>
        <authorList>
            <person name="Ota T."/>
            <person name="Suzuki Y."/>
            <person name="Nishikawa T."/>
            <person name="Otsuki T."/>
            <person name="Sugiyama T."/>
            <person name="Irie R."/>
            <person name="Wakamatsu A."/>
            <person name="Hayashi K."/>
            <person name="Sato H."/>
            <person name="Nagai K."/>
            <person name="Kimura K."/>
            <person name="Makita H."/>
            <person name="Sekine M."/>
            <person name="Obayashi M."/>
            <person name="Nishi T."/>
            <person name="Shibahara T."/>
            <person name="Tanaka T."/>
            <person name="Ishii S."/>
            <person name="Yamamoto J."/>
            <person name="Saito K."/>
            <person name="Kawai Y."/>
            <person name="Isono Y."/>
            <person name="Nakamura Y."/>
            <person name="Nagahari K."/>
            <person name="Murakami K."/>
            <person name="Yasuda T."/>
            <person name="Iwayanagi T."/>
            <person name="Wagatsuma M."/>
            <person name="Shiratori A."/>
            <person name="Sudo H."/>
            <person name="Hosoiri T."/>
            <person name="Kaku Y."/>
            <person name="Kodaira H."/>
            <person name="Kondo H."/>
            <person name="Sugawara M."/>
            <person name="Takahashi M."/>
            <person name="Kanda K."/>
            <person name="Yokoi T."/>
            <person name="Furuya T."/>
            <person name="Kikkawa E."/>
            <person name="Omura Y."/>
            <person name="Abe K."/>
            <person name="Kamihara K."/>
            <person name="Katsuta N."/>
            <person name="Sato K."/>
            <person name="Tanikawa M."/>
            <person name="Yamazaki M."/>
            <person name="Ninomiya K."/>
            <person name="Ishibashi T."/>
            <person name="Yamashita H."/>
            <person name="Murakawa K."/>
            <person name="Fujimori K."/>
            <person name="Tanai H."/>
            <person name="Kimata M."/>
            <person name="Watanabe M."/>
            <person name="Hiraoka S."/>
            <person name="Chiba Y."/>
            <person name="Ishida S."/>
            <person name="Ono Y."/>
            <person name="Takiguchi S."/>
            <person name="Watanabe S."/>
            <person name="Yosida M."/>
            <person name="Hotuta T."/>
            <person name="Kusano J."/>
            <person name="Kanehori K."/>
            <person name="Takahashi-Fujii A."/>
            <person name="Hara H."/>
            <person name="Tanase T.-O."/>
            <person name="Nomura Y."/>
            <person name="Togiya S."/>
            <person name="Komai F."/>
            <person name="Hara R."/>
            <person name="Takeuchi K."/>
            <person name="Arita M."/>
            <person name="Imose N."/>
            <person name="Musashino K."/>
            <person name="Yuuki H."/>
            <person name="Oshima A."/>
            <person name="Sasaki N."/>
            <person name="Aotsuka S."/>
            <person name="Yoshikawa Y."/>
            <person name="Matsunawa H."/>
            <person name="Ichihara T."/>
            <person name="Shiohata N."/>
            <person name="Sano S."/>
            <person name="Moriya S."/>
            <person name="Momiyama H."/>
            <person name="Satoh N."/>
            <person name="Takami S."/>
            <person name="Terashima Y."/>
            <person name="Suzuki O."/>
            <person name="Nakagawa S."/>
            <person name="Senoh A."/>
            <person name="Mizoguchi H."/>
            <person name="Goto Y."/>
            <person name="Shimizu F."/>
            <person name="Wakebe H."/>
            <person name="Hishigaki H."/>
            <person name="Watanabe T."/>
            <person name="Sugiyama A."/>
            <person name="Takemoto M."/>
            <person name="Kawakami B."/>
            <person name="Yamazaki M."/>
            <person name="Watanabe K."/>
            <person name="Kumagai A."/>
            <person name="Itakura S."/>
            <person name="Fukuzumi Y."/>
            <person name="Fujimori Y."/>
            <person name="Komiyama M."/>
            <person name="Tashiro H."/>
            <person name="Tanigami A."/>
            <person name="Fujiwara T."/>
            <person name="Ono T."/>
            <person name="Yamada K."/>
            <person name="Fujii Y."/>
            <person name="Ozaki K."/>
            <person name="Hirao M."/>
            <person name="Ohmori Y."/>
            <person name="Kawabata A."/>
            <person name="Hikiji T."/>
            <person name="Kobatake N."/>
            <person name="Inagaki H."/>
            <person name="Ikema Y."/>
            <person name="Okamoto S."/>
            <person name="Okitani R."/>
            <person name="Kawakami T."/>
            <person name="Noguchi S."/>
            <person name="Itoh T."/>
            <person name="Shigeta K."/>
            <person name="Senba T."/>
            <person name="Matsumura K."/>
            <person name="Nakajima Y."/>
            <person name="Mizuno T."/>
            <person name="Morinaga M."/>
            <person name="Sasaki M."/>
            <person name="Togashi T."/>
            <person name="Oyama M."/>
            <person name="Hata H."/>
            <person name="Watanabe M."/>
            <person name="Komatsu T."/>
            <person name="Mizushima-Sugano J."/>
            <person name="Satoh T."/>
            <person name="Shirai Y."/>
            <person name="Takahashi Y."/>
            <person name="Nakagawa K."/>
            <person name="Okumura K."/>
            <person name="Nagase T."/>
            <person name="Nomura N."/>
            <person name="Kikuchi H."/>
            <person name="Masuho Y."/>
            <person name="Yamashita R."/>
            <person name="Nakai K."/>
            <person name="Yada T."/>
            <person name="Nakamura Y."/>
            <person name="Ohara O."/>
            <person name="Isogai T."/>
            <person name="Sugano S."/>
        </authorList>
    </citation>
    <scope>NUCLEOTIDE SEQUENCE [LARGE SCALE MRNA] (ISOFORMS 1 AND 2)</scope>
    <source>
        <tissue>Brain</tissue>
        <tissue>Pericardium</tissue>
    </source>
</reference>
<reference key="2">
    <citation type="journal article" date="2007" name="BMC Genomics">
        <title>The full-ORF clone resource of the German cDNA consortium.</title>
        <authorList>
            <person name="Bechtel S."/>
            <person name="Rosenfelder H."/>
            <person name="Duda A."/>
            <person name="Schmidt C.P."/>
            <person name="Ernst U."/>
            <person name="Wellenreuther R."/>
            <person name="Mehrle A."/>
            <person name="Schuster C."/>
            <person name="Bahr A."/>
            <person name="Bloecker H."/>
            <person name="Heubner D."/>
            <person name="Hoerlein A."/>
            <person name="Michel G."/>
            <person name="Wedler H."/>
            <person name="Koehrer K."/>
            <person name="Ottenwaelder B."/>
            <person name="Poustka A."/>
            <person name="Wiemann S."/>
            <person name="Schupp I."/>
        </authorList>
    </citation>
    <scope>NUCLEOTIDE SEQUENCE [LARGE SCALE MRNA] (ISOFORM 1)</scope>
    <source>
        <tissue>Heart</tissue>
    </source>
</reference>
<reference key="3">
    <citation type="journal article" date="2004" name="Genome Res.">
        <title>The status, quality, and expansion of the NIH full-length cDNA project: the Mammalian Gene Collection (MGC).</title>
        <authorList>
            <consortium name="The MGC Project Team"/>
        </authorList>
    </citation>
    <scope>NUCLEOTIDE SEQUENCE [LARGE SCALE MRNA] (ISOFORM 1)</scope>
    <source>
        <tissue>Skeletal muscle</tissue>
    </source>
</reference>
<reference key="4">
    <citation type="journal article" date="2014" name="J. Clin. Invest.">
        <title>Leiomodin-3 dysfunction results in thin filament disorganization and nemaline myopathy.</title>
        <authorList>
            <person name="Yuen M."/>
            <person name="Sandaradura S.A."/>
            <person name="Dowling J.J."/>
            <person name="Kostyukova A.S."/>
            <person name="Moroz N."/>
            <person name="Quinlan K.G."/>
            <person name="Lehtokari V.L."/>
            <person name="Ravenscroft G."/>
            <person name="Todd E.J."/>
            <person name="Ceyhan-Birsoy O."/>
            <person name="Gokhin D.S."/>
            <person name="Maluenda J."/>
            <person name="Lek M."/>
            <person name="Nolent F."/>
            <person name="Pappas C.T."/>
            <person name="Novak S.M."/>
            <person name="D'Amico A."/>
            <person name="Malfatti E."/>
            <person name="Thomas B.P."/>
            <person name="Gabriel S.B."/>
            <person name="Gupta N."/>
            <person name="Daly M.J."/>
            <person name="Ilkovski B."/>
            <person name="Houweling P.J."/>
            <person name="Davidson A.E."/>
            <person name="Swanson L.C."/>
            <person name="Brownstein C.A."/>
            <person name="Gupta V.A."/>
            <person name="Medne L."/>
            <person name="Shannon P."/>
            <person name="Martin N."/>
            <person name="Bick D.P."/>
            <person name="Flisberg A."/>
            <person name="Holmberg E."/>
            <person name="Van den Bergh P."/>
            <person name="Lapunzina P."/>
            <person name="Waddell L.B."/>
            <person name="Sloboda D.D."/>
            <person name="Bertini E."/>
            <person name="Chitayat D."/>
            <person name="Telfer W.R."/>
            <person name="Laquerriere A."/>
            <person name="Gregorio C.C."/>
            <person name="Ottenheijm C.A."/>
            <person name="Boennemann C.G."/>
            <person name="Pelin K."/>
            <person name="Beggs A.H."/>
            <person name="Hayashi Y.K."/>
            <person name="Romero N.B."/>
            <person name="Laing N.G."/>
            <person name="Nishino I."/>
            <person name="Wallgren-Pettersson C."/>
            <person name="Melki J."/>
            <person name="Fowler V.M."/>
            <person name="MacArthur D.G."/>
            <person name="North K.N."/>
            <person name="Clarke N.F."/>
        </authorList>
    </citation>
    <scope>FUNCTION</scope>
    <scope>INTERACTION WITH TPM1/2</scope>
    <scope>TISSUE SPECIFICITY</scope>
    <scope>DEVELOPMENTAL STAGE</scope>
    <scope>VARIANT NEM10 ARG-326</scope>
</reference>
<sequence>MSEHSRNSDQEELLDEEINEDEILANLSAEELKELQSEMEVMAPDPSLPVGMIQKDQTDKPPTGNFNHKSLVDYMYWEKASRRMLEEERVPVTFVKSEEKTQEEHEEIEKRNKNMAQYLKEKLNNEIVANKRESKGSSNIQETDEEDEEEEDDDDDDEGEDDGEESEETNREEEGKAKEQIRNCENNCQQVTDKAFKEQRDRPEAQEQSEKKISKLDPKKLALDTSFLKVSTRPSGNQTDLDGSLRRVRKNDPDMKELNLNNIENIPKEMLLDFVNAMKKNKHIKTFSLANVGADENVAFALANMLRENRSITTLNIESNFITGKGIVAIMRCLQFNETLTELRFHNQRHMLGHHAEMEIARLLKANNTLLKMGYHFELPGPRMVVTNLLTRNQDKQRQKRQEEQKQQQLKEQKKLIAMLENGLGLPPGMWELLGGPKPDSRMQEFFQPPPPRPPNPQNVPFSQRSEMMKKPSQAPKYRTDPDSFRVVKLKRIQRKSRMPEAREPPEKTNLKDVIKTLKPVPRNRPPPLVEITPRDQLLNDIRHSSVAYLKPVQLPKELA</sequence>
<gene>
    <name type="primary">LMOD3</name>
</gene>
<evidence type="ECO:0000250" key="1">
    <source>
        <dbReference type="UniProtKB" id="E9QA62"/>
    </source>
</evidence>
<evidence type="ECO:0000255" key="2"/>
<evidence type="ECO:0000255" key="3">
    <source>
        <dbReference type="PROSITE-ProRule" id="PRU00406"/>
    </source>
</evidence>
<evidence type="ECO:0000256" key="4">
    <source>
        <dbReference type="SAM" id="MobiDB-lite"/>
    </source>
</evidence>
<evidence type="ECO:0000269" key="5">
    <source>
    </source>
</evidence>
<evidence type="ECO:0000303" key="6">
    <source>
    </source>
</evidence>
<evidence type="ECO:0000305" key="7"/>
<feature type="chain" id="PRO_0000261175" description="Leiomodin-3">
    <location>
        <begin position="1"/>
        <end position="560"/>
    </location>
</feature>
<feature type="domain" description="WH2" evidence="3">
    <location>
        <begin position="534"/>
        <end position="553"/>
    </location>
</feature>
<feature type="region of interest" description="Interaction with tropomyosin alpha" evidence="5">
    <location>
        <begin position="1"/>
        <end position="49"/>
    </location>
</feature>
<feature type="region of interest" description="Disordered" evidence="4">
    <location>
        <begin position="45"/>
        <end position="68"/>
    </location>
</feature>
<feature type="region of interest" description="Disordered" evidence="4">
    <location>
        <begin position="127"/>
        <end position="217"/>
    </location>
</feature>
<feature type="region of interest" description="Disordered" evidence="4">
    <location>
        <begin position="437"/>
        <end position="480"/>
    </location>
</feature>
<feature type="region of interest" description="Disordered" evidence="4">
    <location>
        <begin position="494"/>
        <end position="530"/>
    </location>
</feature>
<feature type="coiled-coil region" evidence="2">
    <location>
        <begin position="16"/>
        <end position="42"/>
    </location>
</feature>
<feature type="coiled-coil region" evidence="2">
    <location>
        <begin position="386"/>
        <end position="425"/>
    </location>
</feature>
<feature type="compositionally biased region" description="Acidic residues" evidence="4">
    <location>
        <begin position="142"/>
        <end position="167"/>
    </location>
</feature>
<feature type="compositionally biased region" description="Basic and acidic residues" evidence="4">
    <location>
        <begin position="168"/>
        <end position="182"/>
    </location>
</feature>
<feature type="compositionally biased region" description="Polar residues" evidence="4">
    <location>
        <begin position="183"/>
        <end position="192"/>
    </location>
</feature>
<feature type="compositionally biased region" description="Basic and acidic residues" evidence="4">
    <location>
        <begin position="194"/>
        <end position="217"/>
    </location>
</feature>
<feature type="compositionally biased region" description="Pro residues" evidence="4">
    <location>
        <begin position="448"/>
        <end position="458"/>
    </location>
</feature>
<feature type="compositionally biased region" description="Basic and acidic residues" evidence="4">
    <location>
        <begin position="498"/>
        <end position="516"/>
    </location>
</feature>
<feature type="splice variant" id="VSP_021664" description="In isoform 2." evidence="6">
    <location>
        <begin position="1"/>
        <end position="74"/>
    </location>
</feature>
<feature type="splice variant" id="VSP_021665" description="In isoform 2." evidence="6">
    <location>
        <begin position="101"/>
        <end position="122"/>
    </location>
</feature>
<feature type="splice variant" id="VSP_021666" description="In isoform 2." evidence="6">
    <original>MQ</original>
    <variation>IA</variation>
    <location>
        <begin position="443"/>
        <end position="444"/>
    </location>
</feature>
<feature type="splice variant" id="VSP_021667" description="In isoform 2." evidence="6">
    <location>
        <begin position="445"/>
        <end position="560"/>
    </location>
</feature>
<feature type="sequence variant" id="VAR_061863" description="In dbSNP:rs35740823.">
    <original>R</original>
    <variation>H</variation>
    <location>
        <position position="83"/>
    </location>
</feature>
<feature type="sequence variant" id="VAR_052401" description="In dbSNP:rs9835034.">
    <original>I</original>
    <variation>T</variation>
    <location>
        <position position="263"/>
    </location>
</feature>
<feature type="sequence variant" id="VAR_072643" description="In NEM10." evidence="5">
    <original>G</original>
    <variation>R</variation>
    <location>
        <position position="326"/>
    </location>
</feature>
<feature type="sequence variant" id="VAR_034083" description="In dbSNP:rs6810145.">
    <original>K</original>
    <variation>M</variation>
    <location>
        <position position="438"/>
    </location>
</feature>
<feature type="sequence variant" id="VAR_029088" description="In dbSNP:rs17005363.">
    <original>A</original>
    <variation>V</variation>
    <location>
        <position position="560"/>
    </location>
</feature>
<feature type="sequence conflict" description="In Ref. 2; CAL38080." evidence="7" ref="2">
    <original>I</original>
    <variation>V</variation>
    <location>
        <position position="213"/>
    </location>
</feature>
<feature type="sequence conflict" description="In Ref. 2; CAI46110." evidence="7" ref="2">
    <original>S</original>
    <variation>G</variation>
    <location>
        <position position="226"/>
    </location>
</feature>
<feature type="sequence conflict" description="In Ref. 2; CAL38080." evidence="7" ref="2">
    <original>A</original>
    <variation>V</variation>
    <location>
        <position position="301"/>
    </location>
</feature>
<keyword id="KW-0025">Alternative splicing</keyword>
<keyword id="KW-0175">Coiled coil</keyword>
<keyword id="KW-0963">Cytoplasm</keyword>
<keyword id="KW-0206">Cytoskeleton</keyword>
<keyword id="KW-0225">Disease variant</keyword>
<keyword id="KW-1057">Nemaline myopathy</keyword>
<keyword id="KW-1267">Proteomics identification</keyword>
<keyword id="KW-1185">Reference proteome</keyword>
<keyword id="KW-0832">Ubl conjugation</keyword>
<protein>
    <recommendedName>
        <fullName>Leiomodin-3</fullName>
    </recommendedName>
    <alternativeName>
        <fullName>Leiomodin, fetal form</fullName>
    </alternativeName>
</protein>
<name>LMOD3_HUMAN</name>
<dbReference type="EMBL" id="AK057852">
    <property type="protein sequence ID" value="BAB71596.1"/>
    <property type="molecule type" value="mRNA"/>
</dbReference>
<dbReference type="EMBL" id="AK300096">
    <property type="protein sequence ID" value="BAG61897.1"/>
    <property type="molecule type" value="mRNA"/>
</dbReference>
<dbReference type="EMBL" id="AL832709">
    <property type="protein sequence ID" value="CAI46110.1"/>
    <property type="molecule type" value="mRNA"/>
</dbReference>
<dbReference type="EMBL" id="AM393202">
    <property type="protein sequence ID" value="CAL38080.1"/>
    <property type="molecule type" value="mRNA"/>
</dbReference>
<dbReference type="EMBL" id="BC039202">
    <property type="protein sequence ID" value="AAH39202.1"/>
    <property type="status" value="ALT_SEQ"/>
    <property type="molecule type" value="mRNA"/>
</dbReference>
<dbReference type="EMBL" id="BC121019">
    <property type="protein sequence ID" value="AAI21020.1"/>
    <property type="molecule type" value="mRNA"/>
</dbReference>
<dbReference type="CCDS" id="CCDS46862.1">
    <molecule id="Q0VAK6-1"/>
</dbReference>
<dbReference type="RefSeq" id="NP_001291347.1">
    <molecule id="Q0VAK6-1"/>
    <property type="nucleotide sequence ID" value="NM_001304418.3"/>
</dbReference>
<dbReference type="RefSeq" id="NP_938012.2">
    <molecule id="Q0VAK6-1"/>
    <property type="nucleotide sequence ID" value="NM_198271.5"/>
</dbReference>
<dbReference type="SMR" id="Q0VAK6"/>
<dbReference type="BioGRID" id="121107">
    <property type="interactions" value="7"/>
</dbReference>
<dbReference type="FunCoup" id="Q0VAK6">
    <property type="interactions" value="12"/>
</dbReference>
<dbReference type="IntAct" id="Q0VAK6">
    <property type="interactions" value="2"/>
</dbReference>
<dbReference type="STRING" id="9606.ENSP00000414670"/>
<dbReference type="GlyGen" id="Q0VAK6">
    <property type="glycosylation" value="1 site, 1 O-linked glycan (1 site)"/>
</dbReference>
<dbReference type="iPTMnet" id="Q0VAK6"/>
<dbReference type="PhosphoSitePlus" id="Q0VAK6"/>
<dbReference type="BioMuta" id="LMOD3"/>
<dbReference type="DMDM" id="118572771"/>
<dbReference type="jPOST" id="Q0VAK6"/>
<dbReference type="MassIVE" id="Q0VAK6"/>
<dbReference type="PaxDb" id="9606-ENSP00000414670"/>
<dbReference type="PeptideAtlas" id="Q0VAK6"/>
<dbReference type="ProteomicsDB" id="58797">
    <molecule id="Q0VAK6-1"/>
</dbReference>
<dbReference type="ProteomicsDB" id="58798">
    <molecule id="Q0VAK6-2"/>
</dbReference>
<dbReference type="Antibodypedia" id="46385">
    <property type="antibodies" value="41 antibodies from 17 providers"/>
</dbReference>
<dbReference type="DNASU" id="56203"/>
<dbReference type="Ensembl" id="ENST00000420581.7">
    <molecule id="Q0VAK6-1"/>
    <property type="protein sequence ID" value="ENSP00000414670.3"/>
    <property type="gene ID" value="ENSG00000163380.16"/>
</dbReference>
<dbReference type="Ensembl" id="ENST00000475434.1">
    <molecule id="Q0VAK6-1"/>
    <property type="protein sequence ID" value="ENSP00000418645.1"/>
    <property type="gene ID" value="ENSG00000163380.16"/>
</dbReference>
<dbReference type="Ensembl" id="ENST00000489031.5">
    <molecule id="Q0VAK6-1"/>
    <property type="protein sequence ID" value="ENSP00000417210.1"/>
    <property type="gene ID" value="ENSG00000163380.16"/>
</dbReference>
<dbReference type="GeneID" id="56203"/>
<dbReference type="KEGG" id="hsa:56203"/>
<dbReference type="MANE-Select" id="ENST00000420581.7">
    <property type="protein sequence ID" value="ENSP00000414670.3"/>
    <property type="RefSeq nucleotide sequence ID" value="NM_198271.5"/>
    <property type="RefSeq protein sequence ID" value="NP_938012.2"/>
</dbReference>
<dbReference type="UCSC" id="uc003dns.3">
    <molecule id="Q0VAK6-1"/>
    <property type="organism name" value="human"/>
</dbReference>
<dbReference type="AGR" id="HGNC:6649"/>
<dbReference type="CTD" id="56203"/>
<dbReference type="DisGeNET" id="56203"/>
<dbReference type="GeneCards" id="LMOD3"/>
<dbReference type="HGNC" id="HGNC:6649">
    <property type="gene designation" value="LMOD3"/>
</dbReference>
<dbReference type="HPA" id="ENSG00000163380">
    <property type="expression patterns" value="Tissue enhanced (heart muscle, skeletal muscle, tongue)"/>
</dbReference>
<dbReference type="MalaCards" id="LMOD3"/>
<dbReference type="MIM" id="616112">
    <property type="type" value="gene"/>
</dbReference>
<dbReference type="MIM" id="616165">
    <property type="type" value="phenotype"/>
</dbReference>
<dbReference type="neXtProt" id="NX_Q0VAK6"/>
<dbReference type="OpenTargets" id="ENSG00000163380"/>
<dbReference type="Orphanet" id="171430">
    <property type="disease" value="Severe congenital nemaline myopathy"/>
</dbReference>
<dbReference type="Orphanet" id="171436">
    <property type="disease" value="Typical nemaline myopathy"/>
</dbReference>
<dbReference type="PharmGKB" id="PA30415"/>
<dbReference type="VEuPathDB" id="HostDB:ENSG00000163380"/>
<dbReference type="eggNOG" id="KOG3735">
    <property type="taxonomic scope" value="Eukaryota"/>
</dbReference>
<dbReference type="GeneTree" id="ENSGT00940000159731"/>
<dbReference type="HOGENOM" id="CLU_031052_4_1_1"/>
<dbReference type="InParanoid" id="Q0VAK6"/>
<dbReference type="OMA" id="GMWERLG"/>
<dbReference type="OrthoDB" id="2163268at2759"/>
<dbReference type="PAN-GO" id="Q0VAK6">
    <property type="GO annotations" value="7 GO annotations based on evolutionary models"/>
</dbReference>
<dbReference type="PhylomeDB" id="Q0VAK6"/>
<dbReference type="TreeFam" id="TF315841"/>
<dbReference type="PathwayCommons" id="Q0VAK6"/>
<dbReference type="SignaLink" id="Q0VAK6"/>
<dbReference type="BioGRID-ORCS" id="56203">
    <property type="hits" value="17 hits in 1148 CRISPR screens"/>
</dbReference>
<dbReference type="ChiTaRS" id="LMOD3">
    <property type="organism name" value="human"/>
</dbReference>
<dbReference type="GeneWiki" id="LMOD3"/>
<dbReference type="GenomeRNAi" id="56203"/>
<dbReference type="Pharos" id="Q0VAK6">
    <property type="development level" value="Tbio"/>
</dbReference>
<dbReference type="PRO" id="PR:Q0VAK6"/>
<dbReference type="Proteomes" id="UP000005640">
    <property type="component" value="Chromosome 3"/>
</dbReference>
<dbReference type="RNAct" id="Q0VAK6">
    <property type="molecule type" value="protein"/>
</dbReference>
<dbReference type="Bgee" id="ENSG00000163380">
    <property type="expression patterns" value="Expressed in biceps brachii and 119 other cell types or tissues"/>
</dbReference>
<dbReference type="GO" id="GO:0005737">
    <property type="term" value="C:cytoplasm"/>
    <property type="evidence" value="ECO:0000314"/>
    <property type="project" value="UniProtKB"/>
</dbReference>
<dbReference type="GO" id="GO:0005856">
    <property type="term" value="C:cytoskeleton"/>
    <property type="evidence" value="ECO:0000318"/>
    <property type="project" value="GO_Central"/>
</dbReference>
<dbReference type="GO" id="GO:0031430">
    <property type="term" value="C:M band"/>
    <property type="evidence" value="ECO:0000314"/>
    <property type="project" value="UniProtKB"/>
</dbReference>
<dbReference type="GO" id="GO:0030016">
    <property type="term" value="C:myofibril"/>
    <property type="evidence" value="ECO:0000318"/>
    <property type="project" value="GO_Central"/>
</dbReference>
<dbReference type="GO" id="GO:0005865">
    <property type="term" value="C:striated muscle thin filament"/>
    <property type="evidence" value="ECO:0000314"/>
    <property type="project" value="UniProtKB"/>
</dbReference>
<dbReference type="GO" id="GO:0003785">
    <property type="term" value="F:actin monomer binding"/>
    <property type="evidence" value="ECO:0000315"/>
    <property type="project" value="UniProtKB"/>
</dbReference>
<dbReference type="GO" id="GO:0005523">
    <property type="term" value="F:tropomyosin binding"/>
    <property type="evidence" value="ECO:0000315"/>
    <property type="project" value="UniProtKB"/>
</dbReference>
<dbReference type="GO" id="GO:0007015">
    <property type="term" value="P:actin filament organization"/>
    <property type="evidence" value="ECO:0000318"/>
    <property type="project" value="GO_Central"/>
</dbReference>
<dbReference type="GO" id="GO:0045010">
    <property type="term" value="P:actin nucleation"/>
    <property type="evidence" value="ECO:0000315"/>
    <property type="project" value="UniProtKB"/>
</dbReference>
<dbReference type="GO" id="GO:0006936">
    <property type="term" value="P:muscle contraction"/>
    <property type="evidence" value="ECO:0000318"/>
    <property type="project" value="GO_Central"/>
</dbReference>
<dbReference type="GO" id="GO:0030239">
    <property type="term" value="P:myofibril assembly"/>
    <property type="evidence" value="ECO:0000318"/>
    <property type="project" value="GO_Central"/>
</dbReference>
<dbReference type="GO" id="GO:0051694">
    <property type="term" value="P:pointed-end actin filament capping"/>
    <property type="evidence" value="ECO:0007669"/>
    <property type="project" value="InterPro"/>
</dbReference>
<dbReference type="GO" id="GO:0048743">
    <property type="term" value="P:positive regulation of skeletal muscle fiber development"/>
    <property type="evidence" value="ECO:0000315"/>
    <property type="project" value="UniProtKB"/>
</dbReference>
<dbReference type="GO" id="GO:0048741">
    <property type="term" value="P:skeletal muscle fiber development"/>
    <property type="evidence" value="ECO:0000250"/>
    <property type="project" value="UniProtKB"/>
</dbReference>
<dbReference type="GO" id="GO:0030240">
    <property type="term" value="P:skeletal muscle thin filament assembly"/>
    <property type="evidence" value="ECO:0000315"/>
    <property type="project" value="UniProtKB"/>
</dbReference>
<dbReference type="GO" id="GO:0006941">
    <property type="term" value="P:striated muscle contraction"/>
    <property type="evidence" value="ECO:0000315"/>
    <property type="project" value="UniProtKB"/>
</dbReference>
<dbReference type="FunFam" id="3.80.10.10:FF:000078">
    <property type="entry name" value="Leiomodin 3"/>
    <property type="match status" value="1"/>
</dbReference>
<dbReference type="Gene3D" id="3.80.10.10">
    <property type="entry name" value="Ribonuclease Inhibitor"/>
    <property type="match status" value="1"/>
</dbReference>
<dbReference type="InterPro" id="IPR032675">
    <property type="entry name" value="LRR_dom_sf"/>
</dbReference>
<dbReference type="InterPro" id="IPR004934">
    <property type="entry name" value="TMOD"/>
</dbReference>
<dbReference type="PANTHER" id="PTHR10901:SF3">
    <property type="entry name" value="LEIOMODIN-3"/>
    <property type="match status" value="1"/>
</dbReference>
<dbReference type="PANTHER" id="PTHR10901">
    <property type="entry name" value="TROPOMODULIN"/>
    <property type="match status" value="1"/>
</dbReference>
<dbReference type="Pfam" id="PF03250">
    <property type="entry name" value="Tropomodulin"/>
    <property type="match status" value="1"/>
</dbReference>
<dbReference type="SUPFAM" id="SSF52047">
    <property type="entry name" value="RNI-like"/>
    <property type="match status" value="1"/>
</dbReference>
<comment type="function">
    <text evidence="5">Essential for the organization of sarcomeric actin thin filaments in skeletal muscle (PubMed:25250574). Increases the rate of actin polymerization (PubMed:25250574).</text>
</comment>
<comment type="subunit">
    <text evidence="1 5">May interact with tropomyosin alpha (TPM1/2) N-terminus (PubMed:25250574). Interacts with KLHL40; leading to stabilization (By similarity).</text>
</comment>
<comment type="interaction">
    <interactant intactId="EBI-23685399">
        <id>Q0VAK6</id>
    </interactant>
    <interactant intactId="EBI-11959475">
        <id>P25791-3</id>
        <label>LMO2</label>
    </interactant>
    <organismsDiffer>false</organismsDiffer>
    <experiments>3</experiments>
</comment>
<comment type="subcellular location">
    <subcellularLocation>
        <location evidence="5">Cytoplasm</location>
    </subcellularLocation>
    <subcellularLocation>
        <location evidence="5">Cytoplasm</location>
        <location evidence="5">Myofibril</location>
        <location evidence="5">Sarcomere</location>
        <location evidence="5">M line</location>
    </subcellularLocation>
    <subcellularLocation>
        <location evidence="1">Cytoplasm</location>
        <location evidence="1">Myofibril</location>
        <location evidence="1">Sarcomere</location>
        <location evidence="1">A band</location>
    </subcellularLocation>
    <subcellularLocation>
        <location evidence="5">Cytoplasm</location>
        <location evidence="5">Cytoskeleton</location>
    </subcellularLocation>
    <text evidence="5">Highly expressed in nonstriated areas of developing myotubes, where it shows a granular cytoplasmic pattern. In sarcomeres, highly expressed in the M band region and, at lower levels, along actin thin filaments. Not detected in Z-disks. In sarcomeres, may be located near, but not at, actin thin filament pointed end.</text>
</comment>
<comment type="alternative products">
    <event type="alternative splicing"/>
    <isoform>
        <id>Q0VAK6-1</id>
        <name>1</name>
        <sequence type="displayed"/>
    </isoform>
    <isoform>
        <id>Q0VAK6-2</id>
        <name>2</name>
        <sequence type="described" ref="VSP_021664 VSP_021665 VSP_021666 VSP_021667"/>
    </isoform>
</comment>
<comment type="tissue specificity">
    <text evidence="5">Expressed in cardiac and at higher levels in skeletal muscles (at protein level).</text>
</comment>
<comment type="developmental stage">
    <text evidence="5">Expressed soon after the start of myoblast differentiation and in skeletal muscle throughout life from at least 14 weeks gestation (at protein level).</text>
</comment>
<comment type="PTM">
    <text evidence="1">Ubiquitinated, leading to its degradation. Interaction with KLHL40 negatively regulates ubiquitination and degradation.</text>
</comment>
<comment type="disease" evidence="5">
    <disease id="DI-04292">
        <name>Nemaline myopathy 10</name>
        <acronym>NEM10</acronym>
        <description>An autosomal recessive severe form of nemaline myopathy. Nemaline myopathies are muscular disorders characterized by muscle weakness of varying severity and onset, and abnormal thread-like or rod-shaped structures in muscle fibers on histologic examination. NEM10 is characterized by early-onset generalized muscle weakness and hypotonia with respiratory insufficiency and feeding difficulties. Additional features include arthrogryposis or congenital contractures, ophthalmoplegia, a history of prematurity, reduced fetal movements, and polyhydramnios. Most patients die of respiratory failure in early infancy.</description>
        <dbReference type="MIM" id="616165"/>
    </disease>
    <text>The disease is caused by variants affecting the gene represented in this entry.</text>
</comment>
<comment type="similarity">
    <text evidence="7">Belongs to the tropomodulin family.</text>
</comment>
<comment type="sequence caution" evidence="7">
    <conflict type="miscellaneous discrepancy">
        <sequence resource="EMBL-CDS" id="AAH39202"/>
    </conflict>
</comment>